<proteinExistence type="evidence at protein level"/>
<sequence length="650" mass="70337">MMGIGKNTTSKSMEAGSSTEGKYEDEAKHPAFFTLPVVINGGATSSGEQDNEDTELMAIYTTENGIAEKSSLAETLDSTGSLDPQRSDMIYTIEDVPPWYLCIFLGLQHYLTCFSGTIAVPFLLADAMCVGYDQWATSQLIGTIFFCVGITTLLQTTFGCRLPLFQASAFAFLAPARAILSLDKWKCNTTDVSVANGTAELLHTEHIWYPRIREIQGAIIMSSLIEVVIGLLGLPGALLKYIGPLTITPTVALIGLSGFQAAGERAGKHWGIAMLTIFLVLLFSQYARNVKFPLPIYKSKKGWTAYKLQLFKMFPIILAILVSWLLCFIFTVTDVFPPDSTKYGFYARTDARQGVLLVAPWFKVPYPFQWGLPTVSAAGVIGMLSAVVASIIESIGDYYACARLSCAPPPPIHAINRGIFVEGLSCVLDGIFGTGNGSTSSSPNIGVLGITKVGSRRVIQCGAALMLALGMIGKFSALFASLPDPVLGALFCTLFGMITAVGLSNLQFIDLNSSRNLFVLGFSIFFGLVLPSYLRQNPLVTGITGIDQVLNVLLTTAMFVGGCVAFILDNTIPGTPEERGIRKWKKGVGKGNKSLDGMESYNLPFGMNIIKKYRCFSYLPISPTFVGYTWKGLRKSDNSRSSDEDSQATG</sequence>
<accession>Q9UGH3</accession>
<accession>B4DJZ1</accession>
<accession>Q8WWR4</accession>
<accession>Q92512</accession>
<accession>Q96D54</accession>
<accession>Q9UNU1</accession>
<accession>Q9UP85</accession>
<gene>
    <name type="primary">SLC23A2</name>
    <name evidence="11" type="synonym">KIAA0238</name>
    <name type="synonym">NBTL1</name>
    <name type="synonym">SLC23A1</name>
    <name evidence="9" type="synonym">SVCT2</name>
    <name evidence="12" type="synonym">YSPL2</name>
</gene>
<feature type="chain" id="PRO_0000165978" description="Solute carrier family 23 member 2">
    <location>
        <begin position="1"/>
        <end position="650"/>
    </location>
</feature>
<feature type="topological domain" description="Cytoplasmic" evidence="3">
    <location>
        <begin position="9"/>
        <end position="110"/>
    </location>
</feature>
<feature type="transmembrane region" description="Helical" evidence="3">
    <location>
        <begin position="111"/>
        <end position="131"/>
    </location>
</feature>
<feature type="topological domain" description="Extracellular" evidence="3">
    <location>
        <begin position="132"/>
        <end position="139"/>
    </location>
</feature>
<feature type="transmembrane region" description="Helical" evidence="3">
    <location>
        <begin position="140"/>
        <end position="160"/>
    </location>
</feature>
<feature type="topological domain" description="Cytoplasmic" evidence="3">
    <location>
        <position position="161"/>
    </location>
</feature>
<feature type="transmembrane region" description="Helical" evidence="3">
    <location>
        <begin position="162"/>
        <end position="182"/>
    </location>
</feature>
<feature type="topological domain" description="Extracellular" evidence="3">
    <location>
        <begin position="183"/>
        <end position="218"/>
    </location>
</feature>
<feature type="transmembrane region" description="Helical" evidence="3">
    <location>
        <begin position="219"/>
        <end position="239"/>
    </location>
</feature>
<feature type="topological domain" description="Cytoplasmic" evidence="3">
    <location>
        <begin position="240"/>
        <end position="266"/>
    </location>
</feature>
<feature type="transmembrane region" description="Helical" evidence="3">
    <location>
        <begin position="267"/>
        <end position="284"/>
    </location>
</feature>
<feature type="topological domain" description="Extracellular" evidence="3">
    <location>
        <begin position="285"/>
        <end position="288"/>
    </location>
</feature>
<feature type="intramembrane region" description="Helical" evidence="3">
    <location>
        <begin position="289"/>
        <end position="302"/>
    </location>
</feature>
<feature type="topological domain" description="Extracellular" evidence="3">
    <location>
        <begin position="303"/>
        <end position="309"/>
    </location>
</feature>
<feature type="transmembrane region" description="Helical" evidence="3">
    <location>
        <begin position="310"/>
        <end position="330"/>
    </location>
</feature>
<feature type="topological domain" description="Cytoplasmic" evidence="3">
    <location>
        <begin position="331"/>
        <end position="371"/>
    </location>
</feature>
<feature type="transmembrane region" description="Helical" evidence="3">
    <location>
        <begin position="372"/>
        <end position="392"/>
    </location>
</feature>
<feature type="topological domain" description="Extracellular" evidence="3">
    <location>
        <begin position="393"/>
        <end position="417"/>
    </location>
</feature>
<feature type="transmembrane region" description="Helical" evidence="3">
    <location>
        <begin position="418"/>
        <end position="438"/>
    </location>
</feature>
<feature type="topological domain" description="Cytoplasmic" evidence="3">
    <location>
        <begin position="439"/>
        <end position="461"/>
    </location>
</feature>
<feature type="transmembrane region" description="Helical" evidence="3">
    <location>
        <begin position="462"/>
        <end position="482"/>
    </location>
</feature>
<feature type="topological domain" description="Extracellular" evidence="3">
    <location>
        <begin position="483"/>
        <end position="485"/>
    </location>
</feature>
<feature type="transmembrane region" description="Helical" evidence="3">
    <location>
        <begin position="486"/>
        <end position="506"/>
    </location>
</feature>
<feature type="topological domain" description="Cytoplasmic" evidence="3">
    <location>
        <begin position="507"/>
        <end position="516"/>
    </location>
</feature>
<feature type="transmembrane region" description="Helical" evidence="3">
    <location>
        <begin position="517"/>
        <end position="537"/>
    </location>
</feature>
<feature type="topological domain" description="Extracellular" evidence="3">
    <location>
        <begin position="538"/>
        <end position="547"/>
    </location>
</feature>
<feature type="transmembrane region" description="Helical" evidence="3">
    <location>
        <begin position="548"/>
        <end position="568"/>
    </location>
</feature>
<feature type="topological domain" description="Cytoplasmic" evidence="3">
    <location>
        <begin position="569"/>
        <end position="650"/>
    </location>
</feature>
<feature type="region of interest" description="Disordered" evidence="4">
    <location>
        <begin position="1"/>
        <end position="21"/>
    </location>
</feature>
<feature type="compositionally biased region" description="Polar residues" evidence="4">
    <location>
        <begin position="1"/>
        <end position="20"/>
    </location>
</feature>
<feature type="modified residue" description="Phosphoserine" evidence="1">
    <location>
        <position position="70"/>
    </location>
</feature>
<feature type="modified residue" description="Phosphothreonine" evidence="2">
    <location>
        <position position="75"/>
    </location>
</feature>
<feature type="modified residue" description="Phosphoserine" evidence="1">
    <location>
        <position position="78"/>
    </location>
</feature>
<feature type="modified residue" description="Phosphothreonine" evidence="1">
    <location>
        <position position="79"/>
    </location>
</feature>
<feature type="modified residue" description="Phosphoserine" evidence="14 15">
    <location>
        <position position="81"/>
    </location>
</feature>
<feature type="modified residue" description="Phosphothreonine" evidence="1">
    <location>
        <position position="649"/>
    </location>
</feature>
<feature type="glycosylation site" description="N-linked (GlcNAc...) asparagine" evidence="3">
    <location>
        <position position="188"/>
    </location>
</feature>
<feature type="glycosylation site" description="N-linked (GlcNAc...) asparagine" evidence="3">
    <location>
        <position position="196"/>
    </location>
</feature>
<feature type="splice variant" id="VSP_056485" description="In isoform 2." evidence="10">
    <location>
        <begin position="162"/>
        <end position="275"/>
    </location>
</feature>
<feature type="sequence conflict" description="In Ref. 4; AAD11783." evidence="13" ref="4">
    <original>P</original>
    <variation>R</variation>
    <location>
        <position position="30"/>
    </location>
</feature>
<feature type="sequence conflict" description="In Ref. 4; AAD11783." evidence="13" ref="4">
    <original>I</original>
    <variation>T</variation>
    <location>
        <position position="141"/>
    </location>
</feature>
<feature type="sequence conflict" description="In Ref. 1; AAC78806." evidence="13" ref="1">
    <original>A</original>
    <variation>T</variation>
    <location>
        <position position="167"/>
    </location>
</feature>
<feature type="sequence conflict" description="In Ref. 4; AAD11783." evidence="13" ref="4">
    <original>L</original>
    <variation>S</variation>
    <location>
        <position position="182"/>
    </location>
</feature>
<feature type="sequence conflict" description="In Ref. 4; AAD11783." evidence="13" ref="4">
    <original>I</original>
    <variation>V</variation>
    <location>
        <position position="215"/>
    </location>
</feature>
<feature type="sequence conflict" description="In Ref. 5; CAC83100." evidence="13" ref="5">
    <original>F</original>
    <variation>L</variation>
    <location>
        <position position="314"/>
    </location>
</feature>
<feature type="sequence conflict" description="In Ref. 11." evidence="13" ref="11">
    <original>GIFVEGL</original>
    <variation>YVPEKTS</variation>
    <location>
        <begin position="418"/>
        <end position="424"/>
    </location>
</feature>
<name>S23A2_HUMAN</name>
<dbReference type="EMBL" id="AF058319">
    <property type="protein sequence ID" value="AAC78806.1"/>
    <property type="molecule type" value="mRNA"/>
</dbReference>
<dbReference type="EMBL" id="AJ269478">
    <property type="protein sequence ID" value="CAB58120.1"/>
    <property type="molecule type" value="mRNA"/>
</dbReference>
<dbReference type="EMBL" id="AF164142">
    <property type="protein sequence ID" value="AAF80493.1"/>
    <property type="molecule type" value="mRNA"/>
</dbReference>
<dbReference type="EMBL" id="AF092511">
    <property type="protein sequence ID" value="AAD11783.1"/>
    <property type="molecule type" value="mRNA"/>
</dbReference>
<dbReference type="EMBL" id="AJ292318">
    <property type="protein sequence ID" value="CAC83100.1"/>
    <property type="molecule type" value="mRNA"/>
</dbReference>
<dbReference type="EMBL" id="AY380556">
    <property type="protein sequence ID" value="AAQ79775.1"/>
    <property type="molecule type" value="mRNA"/>
</dbReference>
<dbReference type="EMBL" id="D87075">
    <property type="protein sequence ID" value="BAA13244.2"/>
    <property type="status" value="ALT_INIT"/>
    <property type="molecule type" value="mRNA"/>
</dbReference>
<dbReference type="EMBL" id="AK296304">
    <property type="protein sequence ID" value="BAG59003.1"/>
    <property type="molecule type" value="mRNA"/>
</dbReference>
<dbReference type="EMBL" id="AL109841">
    <property type="status" value="NOT_ANNOTATED_CDS"/>
    <property type="molecule type" value="Genomic_DNA"/>
</dbReference>
<dbReference type="EMBL" id="AL121890">
    <property type="status" value="NOT_ANNOTATED_CDS"/>
    <property type="molecule type" value="Genomic_DNA"/>
</dbReference>
<dbReference type="EMBL" id="AL389886">
    <property type="status" value="NOT_ANNOTATED_CDS"/>
    <property type="molecule type" value="Genomic_DNA"/>
</dbReference>
<dbReference type="EMBL" id="BC013112">
    <property type="protein sequence ID" value="AAH13112.1"/>
    <property type="molecule type" value="mRNA"/>
</dbReference>
<dbReference type="CCDS" id="CCDS13085.1">
    <molecule id="Q9UGH3-1"/>
</dbReference>
<dbReference type="PIR" id="JC7095">
    <property type="entry name" value="JC7095"/>
</dbReference>
<dbReference type="RefSeq" id="NP_005107.4">
    <molecule id="Q9UGH3-1"/>
    <property type="nucleotide sequence ID" value="NM_005116.5"/>
</dbReference>
<dbReference type="RefSeq" id="NP_976072.1">
    <molecule id="Q9UGH3-1"/>
    <property type="nucleotide sequence ID" value="NM_203327.2"/>
</dbReference>
<dbReference type="RefSeq" id="XP_011527716.1">
    <property type="nucleotide sequence ID" value="XM_011529414.2"/>
</dbReference>
<dbReference type="RefSeq" id="XP_011527717.1">
    <property type="nucleotide sequence ID" value="XM_011529415.2"/>
</dbReference>
<dbReference type="RefSeq" id="XP_011527718.1">
    <property type="nucleotide sequence ID" value="XM_011529416.2"/>
</dbReference>
<dbReference type="RefSeq" id="XP_011527719.1">
    <property type="nucleotide sequence ID" value="XM_011529417.2"/>
</dbReference>
<dbReference type="RefSeq" id="XP_016883660.1">
    <property type="nucleotide sequence ID" value="XM_017028171.1"/>
</dbReference>
<dbReference type="RefSeq" id="XP_016883661.1">
    <property type="nucleotide sequence ID" value="XM_017028172.1"/>
</dbReference>
<dbReference type="RefSeq" id="XP_016883662.1">
    <property type="nucleotide sequence ID" value="XM_017028173.1"/>
</dbReference>
<dbReference type="RefSeq" id="XP_016883663.1">
    <property type="nucleotide sequence ID" value="XM_017028174.1"/>
</dbReference>
<dbReference type="RefSeq" id="XP_016883665.1">
    <property type="nucleotide sequence ID" value="XM_017028176.1"/>
</dbReference>
<dbReference type="RefSeq" id="XP_016883666.1">
    <property type="nucleotide sequence ID" value="XM_017028177.1"/>
</dbReference>
<dbReference type="PCDDB" id="Q9UGH3"/>
<dbReference type="SMR" id="Q9UGH3"/>
<dbReference type="BioGRID" id="115287">
    <property type="interactions" value="27"/>
</dbReference>
<dbReference type="FunCoup" id="Q9UGH3">
    <property type="interactions" value="280"/>
</dbReference>
<dbReference type="IntAct" id="Q9UGH3">
    <property type="interactions" value="15"/>
</dbReference>
<dbReference type="MINT" id="Q9UGH3"/>
<dbReference type="STRING" id="9606.ENSP00000368637"/>
<dbReference type="ChEMBL" id="CHEMBL3271"/>
<dbReference type="DrugBank" id="DB00126">
    <property type="generic name" value="Ascorbic acid"/>
</dbReference>
<dbReference type="DrugBank" id="DB01586">
    <property type="generic name" value="Ursodeoxycholic acid"/>
</dbReference>
<dbReference type="DrugCentral" id="Q9UGH3"/>
<dbReference type="TCDB" id="2.A.40.6.2">
    <property type="family name" value="the nucleobase/ascorbate transporter (nat) or nucleobase:cation symporter-2 (ncs2) family"/>
</dbReference>
<dbReference type="GlyCosmos" id="Q9UGH3">
    <property type="glycosylation" value="2 sites, No reported glycans"/>
</dbReference>
<dbReference type="GlyGen" id="Q9UGH3">
    <property type="glycosylation" value="4 sites, 1 N-linked glycan (1 site), 1 O-linked glycan (1 site)"/>
</dbReference>
<dbReference type="iPTMnet" id="Q9UGH3"/>
<dbReference type="PhosphoSitePlus" id="Q9UGH3"/>
<dbReference type="SwissPalm" id="Q9UGH3"/>
<dbReference type="BioMuta" id="SLC23A2"/>
<dbReference type="DMDM" id="24212469"/>
<dbReference type="jPOST" id="Q9UGH3"/>
<dbReference type="MassIVE" id="Q9UGH3"/>
<dbReference type="PaxDb" id="9606-ENSP00000368637"/>
<dbReference type="PeptideAtlas" id="Q9UGH3"/>
<dbReference type="ProteomicsDB" id="4421"/>
<dbReference type="ProteomicsDB" id="84214">
    <molecule id="Q9UGH3-1"/>
</dbReference>
<dbReference type="Antibodypedia" id="42663">
    <property type="antibodies" value="127 antibodies from 23 providers"/>
</dbReference>
<dbReference type="DNASU" id="9962"/>
<dbReference type="Ensembl" id="ENST00000338244.6">
    <molecule id="Q9UGH3-1"/>
    <property type="protein sequence ID" value="ENSP00000344322.1"/>
    <property type="gene ID" value="ENSG00000089057.15"/>
</dbReference>
<dbReference type="Ensembl" id="ENST00000379333.5">
    <molecule id="Q9UGH3-1"/>
    <property type="protein sequence ID" value="ENSP00000368637.1"/>
    <property type="gene ID" value="ENSG00000089057.15"/>
</dbReference>
<dbReference type="GeneID" id="9962"/>
<dbReference type="KEGG" id="hsa:9962"/>
<dbReference type="MANE-Select" id="ENST00000338244.6">
    <property type="protein sequence ID" value="ENSP00000344322.1"/>
    <property type="RefSeq nucleotide sequence ID" value="NM_005116.6"/>
    <property type="RefSeq protein sequence ID" value="NP_005107.4"/>
</dbReference>
<dbReference type="UCSC" id="uc002wlg.1">
    <molecule id="Q9UGH3-1"/>
    <property type="organism name" value="human"/>
</dbReference>
<dbReference type="AGR" id="HGNC:10973"/>
<dbReference type="CTD" id="9962"/>
<dbReference type="DisGeNET" id="9962"/>
<dbReference type="GeneCards" id="SLC23A2"/>
<dbReference type="HGNC" id="HGNC:10973">
    <property type="gene designation" value="SLC23A2"/>
</dbReference>
<dbReference type="HPA" id="ENSG00000089057">
    <property type="expression patterns" value="Tissue enhanced (adrenal gland, retina)"/>
</dbReference>
<dbReference type="MIM" id="603791">
    <property type="type" value="gene"/>
</dbReference>
<dbReference type="neXtProt" id="NX_Q9UGH3"/>
<dbReference type="OpenTargets" id="ENSG00000089057"/>
<dbReference type="PharmGKB" id="PA35849"/>
<dbReference type="VEuPathDB" id="HostDB:ENSG00000089057"/>
<dbReference type="eggNOG" id="KOG1292">
    <property type="taxonomic scope" value="Eukaryota"/>
</dbReference>
<dbReference type="GeneTree" id="ENSGT00950000182953"/>
<dbReference type="HOGENOM" id="CLU_017959_5_4_1"/>
<dbReference type="InParanoid" id="Q9UGH3"/>
<dbReference type="OMA" id="MVVSMTE"/>
<dbReference type="OrthoDB" id="1641903at2759"/>
<dbReference type="PAN-GO" id="Q9UGH3">
    <property type="GO annotations" value="2 GO annotations based on evolutionary models"/>
</dbReference>
<dbReference type="PhylomeDB" id="Q9UGH3"/>
<dbReference type="TreeFam" id="TF313272"/>
<dbReference type="PathwayCommons" id="Q9UGH3"/>
<dbReference type="Reactome" id="R-HSA-196836">
    <property type="pathway name" value="Vitamin C (ascorbate) metabolism"/>
</dbReference>
<dbReference type="SignaLink" id="Q9UGH3"/>
<dbReference type="BioGRID-ORCS" id="9962">
    <property type="hits" value="10 hits in 1165 CRISPR screens"/>
</dbReference>
<dbReference type="ChiTaRS" id="SLC23A2">
    <property type="organism name" value="human"/>
</dbReference>
<dbReference type="GeneWiki" id="SLC23A2"/>
<dbReference type="GenomeRNAi" id="9962"/>
<dbReference type="Pharos" id="Q9UGH3">
    <property type="development level" value="Tbio"/>
</dbReference>
<dbReference type="PRO" id="PR:Q9UGH3"/>
<dbReference type="Proteomes" id="UP000005640">
    <property type="component" value="Chromosome 20"/>
</dbReference>
<dbReference type="RNAct" id="Q9UGH3">
    <property type="molecule type" value="protein"/>
</dbReference>
<dbReference type="Bgee" id="ENSG00000089057">
    <property type="expression patterns" value="Expressed in adrenal tissue and 182 other cell types or tissues"/>
</dbReference>
<dbReference type="ExpressionAtlas" id="Q9UGH3">
    <property type="expression patterns" value="baseline and differential"/>
</dbReference>
<dbReference type="GO" id="GO:0016324">
    <property type="term" value="C:apical plasma membrane"/>
    <property type="evidence" value="ECO:0000314"/>
    <property type="project" value="UniProtKB"/>
</dbReference>
<dbReference type="GO" id="GO:0016323">
    <property type="term" value="C:basolateral plasma membrane"/>
    <property type="evidence" value="ECO:0000314"/>
    <property type="project" value="UniProtKB"/>
</dbReference>
<dbReference type="GO" id="GO:0005737">
    <property type="term" value="C:cytoplasm"/>
    <property type="evidence" value="ECO:0007669"/>
    <property type="project" value="Ensembl"/>
</dbReference>
<dbReference type="GO" id="GO:0016020">
    <property type="term" value="C:membrane"/>
    <property type="evidence" value="ECO:0000305"/>
    <property type="project" value="UniProtKB"/>
</dbReference>
<dbReference type="GO" id="GO:0005886">
    <property type="term" value="C:plasma membrane"/>
    <property type="evidence" value="ECO:0000314"/>
    <property type="project" value="UniProtKB"/>
</dbReference>
<dbReference type="GO" id="GO:0008520">
    <property type="term" value="F:L-ascorbate:sodium symporter activity"/>
    <property type="evidence" value="ECO:0000314"/>
    <property type="project" value="UniProtKB"/>
</dbReference>
<dbReference type="GO" id="GO:0015229">
    <property type="term" value="F:L-ascorbic acid transmembrane transporter activity"/>
    <property type="evidence" value="ECO:0000314"/>
    <property type="project" value="UniProtKB"/>
</dbReference>
<dbReference type="GO" id="GO:0008015">
    <property type="term" value="P:blood circulation"/>
    <property type="evidence" value="ECO:0007669"/>
    <property type="project" value="Ensembl"/>
</dbReference>
<dbReference type="GO" id="GO:0007155">
    <property type="term" value="P:cell adhesion"/>
    <property type="evidence" value="ECO:0007669"/>
    <property type="project" value="UniProtKB-KW"/>
</dbReference>
<dbReference type="GO" id="GO:0071361">
    <property type="term" value="P:cellular response to ethanol"/>
    <property type="evidence" value="ECO:0007669"/>
    <property type="project" value="Ensembl"/>
</dbReference>
<dbReference type="GO" id="GO:0019852">
    <property type="term" value="P:L-ascorbic acid metabolic process"/>
    <property type="evidence" value="ECO:0000304"/>
    <property type="project" value="Reactome"/>
</dbReference>
<dbReference type="GO" id="GO:0015882">
    <property type="term" value="P:L-ascorbic acid transmembrane transport"/>
    <property type="evidence" value="ECO:0000314"/>
    <property type="project" value="UniProtKB"/>
</dbReference>
<dbReference type="GO" id="GO:1903861">
    <property type="term" value="P:positive regulation of dendrite extension"/>
    <property type="evidence" value="ECO:0007669"/>
    <property type="project" value="Ensembl"/>
</dbReference>
<dbReference type="GO" id="GO:0006979">
    <property type="term" value="P:response to oxidative stress"/>
    <property type="evidence" value="ECO:0007669"/>
    <property type="project" value="Ensembl"/>
</dbReference>
<dbReference type="InterPro" id="IPR006043">
    <property type="entry name" value="NCS2"/>
</dbReference>
<dbReference type="InterPro" id="IPR006042">
    <property type="entry name" value="Xan_ur_permease"/>
</dbReference>
<dbReference type="PANTHER" id="PTHR11119">
    <property type="entry name" value="XANTHINE-URACIL / VITAMIN C PERMEASE FAMILY MEMBER"/>
    <property type="match status" value="1"/>
</dbReference>
<dbReference type="Pfam" id="PF00860">
    <property type="entry name" value="Xan_ur_permease"/>
    <property type="match status" value="1"/>
</dbReference>
<dbReference type="PROSITE" id="PS01116">
    <property type="entry name" value="XANTH_URACIL_PERMASE"/>
    <property type="match status" value="1"/>
</dbReference>
<protein>
    <recommendedName>
        <fullName>Solute carrier family 23 member 2</fullName>
    </recommendedName>
    <alternativeName>
        <fullName>Na(+)/L-ascorbic acid transporter 2</fullName>
    </alternativeName>
    <alternativeName>
        <fullName evidence="12">Nucleobase transporter-like 1 protein</fullName>
    </alternativeName>
    <alternativeName>
        <fullName evidence="9">Sodium-dependent vitamin C transporter 2</fullName>
        <shortName evidence="9">hSVCT2</shortName>
    </alternativeName>
    <alternativeName>
        <fullName evidence="12">Yolk sac permease-like molecule 2</fullName>
    </alternativeName>
</protein>
<comment type="function">
    <text evidence="5 6">Sodium/ascorbate cotransporter (PubMed:10471399, PubMed:10556521). Mediates electrogenic uptake of vitamin C, with a stoichiometry of 2 Na(+) for each ascorbate (PubMed:10471399).</text>
</comment>
<comment type="catalytic activity">
    <reaction evidence="5">
        <text>L-ascorbate(out) + 2 Na(+)(out) = L-ascorbate(in) + 2 Na(+)(in)</text>
        <dbReference type="Rhea" id="RHEA:69883"/>
        <dbReference type="ChEBI" id="CHEBI:29101"/>
        <dbReference type="ChEBI" id="CHEBI:38290"/>
    </reaction>
</comment>
<comment type="subunit">
    <text evidence="8">Interacts with CLSTN3.</text>
</comment>
<comment type="subcellular location">
    <subcellularLocation>
        <location evidence="7">Cell membrane</location>
        <topology evidence="7">Multi-pass membrane protein</topology>
    </subcellularLocation>
</comment>
<comment type="alternative products">
    <event type="alternative splicing"/>
    <isoform>
        <id>Q9UGH3-1</id>
        <name>1</name>
        <sequence type="displayed"/>
    </isoform>
    <isoform>
        <id>Q9UGH3-2</id>
        <name>2</name>
        <sequence type="described" ref="VSP_056485"/>
    </isoform>
</comment>
<comment type="tissue specificity">
    <text evidence="5">Ubiquitous.</text>
</comment>
<comment type="PTM">
    <text evidence="6">Phosphorylated.</text>
</comment>
<comment type="similarity">
    <text evidence="13">Belongs to the nucleobase:cation symporter-2 (NCS2) (TC 2.A.40) family.</text>
</comment>
<comment type="sequence caution" evidence="13">
    <conflict type="erroneous initiation">
        <sequence resource="EMBL-CDS" id="BAA13244"/>
    </conflict>
</comment>
<reference key="1">
    <citation type="journal article" date="1998" name="Biochim. Biophys. Acta">
        <title>Molecular characterization of two novel transporters from human and mouse kidney and from LLC-PK1 cells reveals a novel conserved family that is homologous to bacterial and Aspergillus nucleobase transporters.</title>
        <authorList>
            <person name="Faaland C.A."/>
            <person name="Race J.E."/>
            <person name="Ricken G."/>
            <person name="Warner F.J."/>
            <person name="Williams W.J."/>
            <person name="Holtzman E.J."/>
        </authorList>
    </citation>
    <scope>NUCLEOTIDE SEQUENCE [MRNA] (ISOFORM 1)</scope>
    <source>
        <tissue>Kidney</tissue>
    </source>
</reference>
<reference key="2">
    <citation type="journal article" date="1999" name="Biochem. Biophys. Res. Commun.">
        <title>Human placental sodium-dependent vitamin C transporter (SVCT2): molecular cloning and transport function.</title>
        <authorList>
            <person name="Rajan D.P."/>
            <person name="Huang W."/>
            <person name="Dutta B."/>
            <person name="Devoe L.D."/>
            <person name="Leibach F.H."/>
            <person name="Ganapathy V."/>
            <person name="Prasad P.D."/>
        </authorList>
    </citation>
    <scope>NUCLEOTIDE SEQUENCE [MRNA] (ISOFORM 1)</scope>
    <scope>FUNCTION</scope>
    <scope>TRANSPORTER ACTIVITY</scope>
    <scope>TISSUE SPECIFICITY</scope>
    <source>
        <tissue>Choriocarcinoma</tissue>
    </source>
</reference>
<reference key="3">
    <citation type="journal article" date="1999" name="FEBS Lett.">
        <title>Cloning and functional characterization of the human sodium-dependent vitamin C transporters hSVCT1 and hSVCT2.</title>
        <authorList>
            <person name="Daruwala R.C."/>
            <person name="Song J."/>
            <person name="Koh W.S."/>
            <person name="Rumsey S.C."/>
            <person name="Levine M."/>
        </authorList>
    </citation>
    <scope>NUCLEOTIDE SEQUENCE [MRNA] (ISOFORM 1)</scope>
    <scope>FUNCTION</scope>
    <scope>PHOSPHORYLATION</scope>
    <source>
        <tissue>Kidney</tissue>
    </source>
</reference>
<reference key="4">
    <citation type="journal article" date="1999" name="Genomics">
        <title>A human nucleobase transporter-like cDNA (SLC23A1): member of a transporter family conserved from bacteria to mammals.</title>
        <authorList>
            <person name="Hogue D.L."/>
            <person name="Ling V."/>
        </authorList>
    </citation>
    <scope>NUCLEOTIDE SEQUENCE [MRNA] (ISOFORM 1)</scope>
    <source>
        <tissue>Mammary carcinoma</tissue>
    </source>
</reference>
<reference key="5">
    <citation type="journal article" date="2001" name="Mol. Membr. Biol.">
        <title>Vitamin C transport systems of mammalian cells.</title>
        <authorList>
            <person name="Liang W.J."/>
            <person name="Johnson D."/>
            <person name="Jarvis S.M."/>
        </authorList>
    </citation>
    <scope>NUCLEOTIDE SEQUENCE [MRNA] (ISOFORM 1)</scope>
    <source>
        <tissue>Placenta</tissue>
    </source>
</reference>
<reference key="6">
    <citation type="submission" date="2003-09" db="EMBL/GenBank/DDBJ databases">
        <title>SVCT2 in ciliated human tracheal epithelial cultures.</title>
        <authorList>
            <person name="Schwarzer C."/>
            <person name="Borcanski G."/>
            <person name="Widdicombe J."/>
            <person name="Fischer H."/>
            <person name="Illek B."/>
        </authorList>
    </citation>
    <scope>NUCLEOTIDE SEQUENCE [MRNA] (ISOFORM 1)</scope>
    <source>
        <tissue>Trachea</tissue>
    </source>
</reference>
<reference key="7">
    <citation type="journal article" date="1996" name="DNA Res.">
        <title>Prediction of the coding sequences of unidentified human genes. VI. The coding sequences of 80 new genes (KIAA0201-KIAA0280) deduced by analysis of cDNA clones from cell line KG-1 and brain.</title>
        <authorList>
            <person name="Nagase T."/>
            <person name="Seki N."/>
            <person name="Ishikawa K."/>
            <person name="Ohira M."/>
            <person name="Kawarabayasi Y."/>
            <person name="Ohara O."/>
            <person name="Tanaka A."/>
            <person name="Kotani H."/>
            <person name="Miyajima N."/>
            <person name="Nomura N."/>
        </authorList>
    </citation>
    <scope>NUCLEOTIDE SEQUENCE [LARGE SCALE MRNA] (ISOFORM 1)</scope>
    <source>
        <tissue>Brain</tissue>
    </source>
</reference>
<reference key="8">
    <citation type="journal article" date="2002" name="DNA Res.">
        <title>Construction of expression-ready cDNA clones for KIAA genes: manual curation of 330 KIAA cDNA clones.</title>
        <authorList>
            <person name="Nakajima D."/>
            <person name="Okazaki N."/>
            <person name="Yamakawa H."/>
            <person name="Kikuno R."/>
            <person name="Ohara O."/>
            <person name="Nagase T."/>
        </authorList>
    </citation>
    <scope>SEQUENCE REVISION</scope>
</reference>
<reference key="9">
    <citation type="journal article" date="2004" name="Nat. Genet.">
        <title>Complete sequencing and characterization of 21,243 full-length human cDNAs.</title>
        <authorList>
            <person name="Ota T."/>
            <person name="Suzuki Y."/>
            <person name="Nishikawa T."/>
            <person name="Otsuki T."/>
            <person name="Sugiyama T."/>
            <person name="Irie R."/>
            <person name="Wakamatsu A."/>
            <person name="Hayashi K."/>
            <person name="Sato H."/>
            <person name="Nagai K."/>
            <person name="Kimura K."/>
            <person name="Makita H."/>
            <person name="Sekine M."/>
            <person name="Obayashi M."/>
            <person name="Nishi T."/>
            <person name="Shibahara T."/>
            <person name="Tanaka T."/>
            <person name="Ishii S."/>
            <person name="Yamamoto J."/>
            <person name="Saito K."/>
            <person name="Kawai Y."/>
            <person name="Isono Y."/>
            <person name="Nakamura Y."/>
            <person name="Nagahari K."/>
            <person name="Murakami K."/>
            <person name="Yasuda T."/>
            <person name="Iwayanagi T."/>
            <person name="Wagatsuma M."/>
            <person name="Shiratori A."/>
            <person name="Sudo H."/>
            <person name="Hosoiri T."/>
            <person name="Kaku Y."/>
            <person name="Kodaira H."/>
            <person name="Kondo H."/>
            <person name="Sugawara M."/>
            <person name="Takahashi M."/>
            <person name="Kanda K."/>
            <person name="Yokoi T."/>
            <person name="Furuya T."/>
            <person name="Kikkawa E."/>
            <person name="Omura Y."/>
            <person name="Abe K."/>
            <person name="Kamihara K."/>
            <person name="Katsuta N."/>
            <person name="Sato K."/>
            <person name="Tanikawa M."/>
            <person name="Yamazaki M."/>
            <person name="Ninomiya K."/>
            <person name="Ishibashi T."/>
            <person name="Yamashita H."/>
            <person name="Murakawa K."/>
            <person name="Fujimori K."/>
            <person name="Tanai H."/>
            <person name="Kimata M."/>
            <person name="Watanabe M."/>
            <person name="Hiraoka S."/>
            <person name="Chiba Y."/>
            <person name="Ishida S."/>
            <person name="Ono Y."/>
            <person name="Takiguchi S."/>
            <person name="Watanabe S."/>
            <person name="Yosida M."/>
            <person name="Hotuta T."/>
            <person name="Kusano J."/>
            <person name="Kanehori K."/>
            <person name="Takahashi-Fujii A."/>
            <person name="Hara H."/>
            <person name="Tanase T.-O."/>
            <person name="Nomura Y."/>
            <person name="Togiya S."/>
            <person name="Komai F."/>
            <person name="Hara R."/>
            <person name="Takeuchi K."/>
            <person name="Arita M."/>
            <person name="Imose N."/>
            <person name="Musashino K."/>
            <person name="Yuuki H."/>
            <person name="Oshima A."/>
            <person name="Sasaki N."/>
            <person name="Aotsuka S."/>
            <person name="Yoshikawa Y."/>
            <person name="Matsunawa H."/>
            <person name="Ichihara T."/>
            <person name="Shiohata N."/>
            <person name="Sano S."/>
            <person name="Moriya S."/>
            <person name="Momiyama H."/>
            <person name="Satoh N."/>
            <person name="Takami S."/>
            <person name="Terashima Y."/>
            <person name="Suzuki O."/>
            <person name="Nakagawa S."/>
            <person name="Senoh A."/>
            <person name="Mizoguchi H."/>
            <person name="Goto Y."/>
            <person name="Shimizu F."/>
            <person name="Wakebe H."/>
            <person name="Hishigaki H."/>
            <person name="Watanabe T."/>
            <person name="Sugiyama A."/>
            <person name="Takemoto M."/>
            <person name="Kawakami B."/>
            <person name="Yamazaki M."/>
            <person name="Watanabe K."/>
            <person name="Kumagai A."/>
            <person name="Itakura S."/>
            <person name="Fukuzumi Y."/>
            <person name="Fujimori Y."/>
            <person name="Komiyama M."/>
            <person name="Tashiro H."/>
            <person name="Tanigami A."/>
            <person name="Fujiwara T."/>
            <person name="Ono T."/>
            <person name="Yamada K."/>
            <person name="Fujii Y."/>
            <person name="Ozaki K."/>
            <person name="Hirao M."/>
            <person name="Ohmori Y."/>
            <person name="Kawabata A."/>
            <person name="Hikiji T."/>
            <person name="Kobatake N."/>
            <person name="Inagaki H."/>
            <person name="Ikema Y."/>
            <person name="Okamoto S."/>
            <person name="Okitani R."/>
            <person name="Kawakami T."/>
            <person name="Noguchi S."/>
            <person name="Itoh T."/>
            <person name="Shigeta K."/>
            <person name="Senba T."/>
            <person name="Matsumura K."/>
            <person name="Nakajima Y."/>
            <person name="Mizuno T."/>
            <person name="Morinaga M."/>
            <person name="Sasaki M."/>
            <person name="Togashi T."/>
            <person name="Oyama M."/>
            <person name="Hata H."/>
            <person name="Watanabe M."/>
            <person name="Komatsu T."/>
            <person name="Mizushima-Sugano J."/>
            <person name="Satoh T."/>
            <person name="Shirai Y."/>
            <person name="Takahashi Y."/>
            <person name="Nakagawa K."/>
            <person name="Okumura K."/>
            <person name="Nagase T."/>
            <person name="Nomura N."/>
            <person name="Kikuchi H."/>
            <person name="Masuho Y."/>
            <person name="Yamashita R."/>
            <person name="Nakai K."/>
            <person name="Yada T."/>
            <person name="Nakamura Y."/>
            <person name="Ohara O."/>
            <person name="Isogai T."/>
            <person name="Sugano S."/>
        </authorList>
    </citation>
    <scope>NUCLEOTIDE SEQUENCE [LARGE SCALE MRNA] (ISOFORM 2)</scope>
    <source>
        <tissue>Thalamus</tissue>
    </source>
</reference>
<reference key="10">
    <citation type="journal article" date="2001" name="Nature">
        <title>The DNA sequence and comparative analysis of human chromosome 20.</title>
        <authorList>
            <person name="Deloukas P."/>
            <person name="Matthews L.H."/>
            <person name="Ashurst J.L."/>
            <person name="Burton J."/>
            <person name="Gilbert J.G.R."/>
            <person name="Jones M."/>
            <person name="Stavrides G."/>
            <person name="Almeida J.P."/>
            <person name="Babbage A.K."/>
            <person name="Bagguley C.L."/>
            <person name="Bailey J."/>
            <person name="Barlow K.F."/>
            <person name="Bates K.N."/>
            <person name="Beard L.M."/>
            <person name="Beare D.M."/>
            <person name="Beasley O.P."/>
            <person name="Bird C.P."/>
            <person name="Blakey S.E."/>
            <person name="Bridgeman A.M."/>
            <person name="Brown A.J."/>
            <person name="Buck D."/>
            <person name="Burrill W.D."/>
            <person name="Butler A.P."/>
            <person name="Carder C."/>
            <person name="Carter N.P."/>
            <person name="Chapman J.C."/>
            <person name="Clamp M."/>
            <person name="Clark G."/>
            <person name="Clark L.N."/>
            <person name="Clark S.Y."/>
            <person name="Clee C.M."/>
            <person name="Clegg S."/>
            <person name="Cobley V.E."/>
            <person name="Collier R.E."/>
            <person name="Connor R.E."/>
            <person name="Corby N.R."/>
            <person name="Coulson A."/>
            <person name="Coville G.J."/>
            <person name="Deadman R."/>
            <person name="Dhami P.D."/>
            <person name="Dunn M."/>
            <person name="Ellington A.G."/>
            <person name="Frankland J.A."/>
            <person name="Fraser A."/>
            <person name="French L."/>
            <person name="Garner P."/>
            <person name="Grafham D.V."/>
            <person name="Griffiths C."/>
            <person name="Griffiths M.N.D."/>
            <person name="Gwilliam R."/>
            <person name="Hall R.E."/>
            <person name="Hammond S."/>
            <person name="Harley J.L."/>
            <person name="Heath P.D."/>
            <person name="Ho S."/>
            <person name="Holden J.L."/>
            <person name="Howden P.J."/>
            <person name="Huckle E."/>
            <person name="Hunt A.R."/>
            <person name="Hunt S.E."/>
            <person name="Jekosch K."/>
            <person name="Johnson C.M."/>
            <person name="Johnson D."/>
            <person name="Kay M.P."/>
            <person name="Kimberley A.M."/>
            <person name="King A."/>
            <person name="Knights A."/>
            <person name="Laird G.K."/>
            <person name="Lawlor S."/>
            <person name="Lehvaeslaiho M.H."/>
            <person name="Leversha M.A."/>
            <person name="Lloyd C."/>
            <person name="Lloyd D.M."/>
            <person name="Lovell J.D."/>
            <person name="Marsh V.L."/>
            <person name="Martin S.L."/>
            <person name="McConnachie L.J."/>
            <person name="McLay K."/>
            <person name="McMurray A.A."/>
            <person name="Milne S.A."/>
            <person name="Mistry D."/>
            <person name="Moore M.J.F."/>
            <person name="Mullikin J.C."/>
            <person name="Nickerson T."/>
            <person name="Oliver K."/>
            <person name="Parker A."/>
            <person name="Patel R."/>
            <person name="Pearce T.A.V."/>
            <person name="Peck A.I."/>
            <person name="Phillimore B.J.C.T."/>
            <person name="Prathalingam S.R."/>
            <person name="Plumb R.W."/>
            <person name="Ramsay H."/>
            <person name="Rice C.M."/>
            <person name="Ross M.T."/>
            <person name="Scott C.E."/>
            <person name="Sehra H.K."/>
            <person name="Shownkeen R."/>
            <person name="Sims S."/>
            <person name="Skuce C.D."/>
            <person name="Smith M.L."/>
            <person name="Soderlund C."/>
            <person name="Steward C.A."/>
            <person name="Sulston J.E."/>
            <person name="Swann R.M."/>
            <person name="Sycamore N."/>
            <person name="Taylor R."/>
            <person name="Tee L."/>
            <person name="Thomas D.W."/>
            <person name="Thorpe A."/>
            <person name="Tracey A."/>
            <person name="Tromans A.C."/>
            <person name="Vaudin M."/>
            <person name="Wall M."/>
            <person name="Wallis J.M."/>
            <person name="Whitehead S.L."/>
            <person name="Whittaker P."/>
            <person name="Willey D.L."/>
            <person name="Williams L."/>
            <person name="Williams S.A."/>
            <person name="Wilming L."/>
            <person name="Wray P.W."/>
            <person name="Hubbard T."/>
            <person name="Durbin R.M."/>
            <person name="Bentley D.R."/>
            <person name="Beck S."/>
            <person name="Rogers J."/>
        </authorList>
    </citation>
    <scope>NUCLEOTIDE SEQUENCE [LARGE SCALE GENOMIC DNA]</scope>
</reference>
<reference key="11">
    <citation type="journal article" date="2004" name="Genome Res.">
        <title>The status, quality, and expansion of the NIH full-length cDNA project: the Mammalian Gene Collection (MGC).</title>
        <authorList>
            <consortium name="The MGC Project Team"/>
        </authorList>
    </citation>
    <scope>NUCLEOTIDE SEQUENCE [LARGE SCALE MRNA] OF 1-424 (ISOFORM 1)</scope>
    <source>
        <tissue>Skin</tissue>
    </source>
</reference>
<reference key="12">
    <citation type="journal article" date="2009" name="Exp. Cell Res.">
        <title>Topological studies of hSVCT1, the human sodium-dependent vitamin C transporter and the influence of N-glycosylation on its intracellular targeting.</title>
        <authorList>
            <person name="Velho A.M."/>
            <person name="Jarvis S.M."/>
        </authorList>
    </citation>
    <scope>SUBCELLULAR LOCATION</scope>
    <scope>TOPOLOGY</scope>
</reference>
<reference key="13">
    <citation type="journal article" date="2009" name="Sci. Signal.">
        <title>Quantitative phosphoproteomic analysis of T cell receptor signaling reveals system-wide modulation of protein-protein interactions.</title>
        <authorList>
            <person name="Mayya V."/>
            <person name="Lundgren D.H."/>
            <person name="Hwang S.-I."/>
            <person name="Rezaul K."/>
            <person name="Wu L."/>
            <person name="Eng J.K."/>
            <person name="Rodionov V."/>
            <person name="Han D.K."/>
        </authorList>
    </citation>
    <scope>PHOSPHORYLATION [LARGE SCALE ANALYSIS] AT SER-81</scope>
    <scope>IDENTIFICATION BY MASS SPECTROMETRY [LARGE SCALE ANALYSIS]</scope>
    <source>
        <tissue>Leukemic T-cell</tissue>
    </source>
</reference>
<reference key="14">
    <citation type="journal article" date="2013" name="J. Proteome Res.">
        <title>Toward a comprehensive characterization of a human cancer cell phosphoproteome.</title>
        <authorList>
            <person name="Zhou H."/>
            <person name="Di Palma S."/>
            <person name="Preisinger C."/>
            <person name="Peng M."/>
            <person name="Polat A.N."/>
            <person name="Heck A.J."/>
            <person name="Mohammed S."/>
        </authorList>
    </citation>
    <scope>PHOSPHORYLATION [LARGE SCALE ANALYSIS] AT SER-81</scope>
    <scope>IDENTIFICATION BY MASS SPECTROMETRY [LARGE SCALE ANALYSIS]</scope>
    <source>
        <tissue>Cervix carcinoma</tissue>
        <tissue>Erythroleukemia</tissue>
    </source>
</reference>
<reference key="15">
    <citation type="journal article" date="2021" name="Int. J. Biol. Macromol.">
        <title>Calsyntenin-3 interacts with the sodium-dependent vitamin C transporter-2 to regulate vitamin C uptake.</title>
        <authorList>
            <person name="Subramanian V.S."/>
            <person name="Teafatiller T."/>
            <person name="Vidal J."/>
            <person name="Gunaratne G.S."/>
            <person name="Rodriguez-Ortiz C.J."/>
            <person name="Kitazawa M."/>
            <person name="Marchant J.S."/>
        </authorList>
    </citation>
    <scope>INTERACTION WITH CLSTN3</scope>
</reference>
<keyword id="KW-0025">Alternative splicing</keyword>
<keyword id="KW-0106">Calcium</keyword>
<keyword id="KW-0130">Cell adhesion</keyword>
<keyword id="KW-1003">Cell membrane</keyword>
<keyword id="KW-0325">Glycoprotein</keyword>
<keyword id="KW-0406">Ion transport</keyword>
<keyword id="KW-0472">Membrane</keyword>
<keyword id="KW-0597">Phosphoprotein</keyword>
<keyword id="KW-1267">Proteomics identification</keyword>
<keyword id="KW-1185">Reference proteome</keyword>
<keyword id="KW-0677">Repeat</keyword>
<keyword id="KW-0915">Sodium</keyword>
<keyword id="KW-0739">Sodium transport</keyword>
<keyword id="KW-0769">Symport</keyword>
<keyword id="KW-0812">Transmembrane</keyword>
<keyword id="KW-1133">Transmembrane helix</keyword>
<keyword id="KW-0813">Transport</keyword>
<evidence type="ECO:0000250" key="1">
    <source>
        <dbReference type="UniProtKB" id="Q9EPR4"/>
    </source>
</evidence>
<evidence type="ECO:0000250" key="2">
    <source>
        <dbReference type="UniProtKB" id="Q9WTW8"/>
    </source>
</evidence>
<evidence type="ECO:0000255" key="3"/>
<evidence type="ECO:0000256" key="4">
    <source>
        <dbReference type="SAM" id="MobiDB-lite"/>
    </source>
</evidence>
<evidence type="ECO:0000269" key="5">
    <source>
    </source>
</evidence>
<evidence type="ECO:0000269" key="6">
    <source>
    </source>
</evidence>
<evidence type="ECO:0000269" key="7">
    <source>
    </source>
</evidence>
<evidence type="ECO:0000269" key="8">
    <source>
    </source>
</evidence>
<evidence type="ECO:0000303" key="9">
    <source>
    </source>
</evidence>
<evidence type="ECO:0000303" key="10">
    <source>
    </source>
</evidence>
<evidence type="ECO:0000303" key="11">
    <source>
    </source>
</evidence>
<evidence type="ECO:0000303" key="12">
    <source>
    </source>
</evidence>
<evidence type="ECO:0000305" key="13"/>
<evidence type="ECO:0007744" key="14">
    <source>
    </source>
</evidence>
<evidence type="ECO:0007744" key="15">
    <source>
    </source>
</evidence>
<organism>
    <name type="scientific">Homo sapiens</name>
    <name type="common">Human</name>
    <dbReference type="NCBI Taxonomy" id="9606"/>
    <lineage>
        <taxon>Eukaryota</taxon>
        <taxon>Metazoa</taxon>
        <taxon>Chordata</taxon>
        <taxon>Craniata</taxon>
        <taxon>Vertebrata</taxon>
        <taxon>Euteleostomi</taxon>
        <taxon>Mammalia</taxon>
        <taxon>Eutheria</taxon>
        <taxon>Euarchontoglires</taxon>
        <taxon>Primates</taxon>
        <taxon>Haplorrhini</taxon>
        <taxon>Catarrhini</taxon>
        <taxon>Hominidae</taxon>
        <taxon>Homo</taxon>
    </lineage>
</organism>